<name>NTRC_RHILP</name>
<protein>
    <recommendedName>
        <fullName evidence="1">DNA-binding transcriptional regulator NtrC</fullName>
    </recommendedName>
    <alternativeName>
        <fullName evidence="1">Nitrogen regulation protein NR(I)</fullName>
    </alternativeName>
    <alternativeName>
        <fullName evidence="1">Nitrogen regulator I</fullName>
        <shortName evidence="1">NRI</shortName>
    </alternativeName>
</protein>
<organism>
    <name type="scientific">Rhizobium leguminosarum bv. phaseoli</name>
    <dbReference type="NCBI Taxonomy" id="385"/>
    <lineage>
        <taxon>Bacteria</taxon>
        <taxon>Pseudomonadati</taxon>
        <taxon>Pseudomonadota</taxon>
        <taxon>Alphaproteobacteria</taxon>
        <taxon>Hyphomicrobiales</taxon>
        <taxon>Rhizobiaceae</taxon>
        <taxon>Rhizobium/Agrobacterium group</taxon>
        <taxon>Rhizobium</taxon>
    </lineage>
</organism>
<accession>P41502</accession>
<comment type="function">
    <text evidence="1">Member of the two-component regulatory system NtrB/NtrC, which controls expression of the nitrogen-regulated (ntr) genes in response to nitrogen limitation. Phosphorylated NtrC binds directly to DNA and stimulates the formation of open promoter-sigma54-RNA polymerase complexes.</text>
</comment>
<comment type="subcellular location">
    <subcellularLocation>
        <location evidence="1">Cytoplasm</location>
    </subcellularLocation>
</comment>
<comment type="PTM">
    <text evidence="1">Phosphorylated and dephosphorylated by NtrB.</text>
</comment>
<gene>
    <name type="primary">ntrC</name>
</gene>
<sequence>MTATILVADDDAAIRTVLNQALSRAG</sequence>
<evidence type="ECO:0000250" key="1">
    <source>
        <dbReference type="UniProtKB" id="P0AFB8"/>
    </source>
</evidence>
<evidence type="ECO:0000255" key="2">
    <source>
        <dbReference type="PROSITE-ProRule" id="PRU00169"/>
    </source>
</evidence>
<reference key="1">
    <citation type="journal article" date="1993" name="Mol. Microbiol.">
        <title>The ntrBC genes of Rhizobium leguminosarum are part of a complex operon subject to negative regulation.</title>
        <authorList>
            <person name="Patriarca E.J."/>
            <person name="Riccio A."/>
            <person name="Tate R."/>
            <person name="Colonna-Romano S."/>
            <person name="Iaccarino M."/>
            <person name="Defez R."/>
        </authorList>
    </citation>
    <scope>NUCLEOTIDE SEQUENCE [GENOMIC DNA]</scope>
    <source>
        <strain>CE-3</strain>
    </source>
</reference>
<keyword id="KW-0010">Activator</keyword>
<keyword id="KW-0067">ATP-binding</keyword>
<keyword id="KW-0963">Cytoplasm</keyword>
<keyword id="KW-0238">DNA-binding</keyword>
<keyword id="KW-0535">Nitrogen fixation</keyword>
<keyword id="KW-0547">Nucleotide-binding</keyword>
<keyword id="KW-0597">Phosphoprotein</keyword>
<keyword id="KW-0678">Repressor</keyword>
<keyword id="KW-0804">Transcription</keyword>
<keyword id="KW-0805">Transcription regulation</keyword>
<keyword id="KW-0902">Two-component regulatory system</keyword>
<dbReference type="EMBL" id="X71436">
    <property type="status" value="NOT_ANNOTATED_CDS"/>
    <property type="molecule type" value="Genomic_DNA"/>
</dbReference>
<dbReference type="PIR" id="S36203">
    <property type="entry name" value="S36203"/>
</dbReference>
<dbReference type="SMR" id="P41502"/>
<dbReference type="GO" id="GO:0005737">
    <property type="term" value="C:cytoplasm"/>
    <property type="evidence" value="ECO:0007669"/>
    <property type="project" value="UniProtKB-SubCell"/>
</dbReference>
<dbReference type="GO" id="GO:0005524">
    <property type="term" value="F:ATP binding"/>
    <property type="evidence" value="ECO:0007669"/>
    <property type="project" value="UniProtKB-KW"/>
</dbReference>
<dbReference type="GO" id="GO:0003677">
    <property type="term" value="F:DNA binding"/>
    <property type="evidence" value="ECO:0007669"/>
    <property type="project" value="UniProtKB-KW"/>
</dbReference>
<dbReference type="GO" id="GO:0009399">
    <property type="term" value="P:nitrogen fixation"/>
    <property type="evidence" value="ECO:0007669"/>
    <property type="project" value="UniProtKB-KW"/>
</dbReference>
<dbReference type="GO" id="GO:0000160">
    <property type="term" value="P:phosphorelay signal transduction system"/>
    <property type="evidence" value="ECO:0007669"/>
    <property type="project" value="UniProtKB-KW"/>
</dbReference>
<dbReference type="InterPro" id="IPR001789">
    <property type="entry name" value="Sig_transdc_resp-reg_receiver"/>
</dbReference>
<dbReference type="PROSITE" id="PS50110">
    <property type="entry name" value="RESPONSE_REGULATORY"/>
    <property type="match status" value="1"/>
</dbReference>
<proteinExistence type="inferred from homology"/>
<feature type="chain" id="PRO_0000081172" description="DNA-binding transcriptional regulator NtrC">
    <location>
        <begin position="1"/>
        <end position="26" status="greater than"/>
    </location>
</feature>
<feature type="domain" description="Response regulatory" evidence="2">
    <location>
        <begin position="4"/>
        <end position="26" status="greater than"/>
    </location>
</feature>
<feature type="non-terminal residue">
    <location>
        <position position="26"/>
    </location>
</feature>